<accession>Q5H4J1</accession>
<keyword id="KW-0963">Cytoplasm</keyword>
<keyword id="KW-0378">Hydrolase</keyword>
<keyword id="KW-0546">Nucleotide metabolism</keyword>
<keyword id="KW-1185">Reference proteome</keyword>
<organism>
    <name type="scientific">Xanthomonas oryzae pv. oryzae (strain KACC10331 / KXO85)</name>
    <dbReference type="NCBI Taxonomy" id="291331"/>
    <lineage>
        <taxon>Bacteria</taxon>
        <taxon>Pseudomonadati</taxon>
        <taxon>Pseudomonadota</taxon>
        <taxon>Gammaproteobacteria</taxon>
        <taxon>Lysobacterales</taxon>
        <taxon>Lysobacteraceae</taxon>
        <taxon>Xanthomonas</taxon>
    </lineage>
</organism>
<proteinExistence type="inferred from homology"/>
<reference key="1">
    <citation type="journal article" date="2005" name="Nucleic Acids Res.">
        <title>The genome sequence of Xanthomonas oryzae pathovar oryzae KACC10331, the bacterial blight pathogen of rice.</title>
        <authorList>
            <person name="Lee B.-M."/>
            <person name="Park Y.-J."/>
            <person name="Park D.-S."/>
            <person name="Kang H.-W."/>
            <person name="Kim J.-G."/>
            <person name="Song E.-S."/>
            <person name="Park I.-C."/>
            <person name="Yoon U.-H."/>
            <person name="Hahn J.-H."/>
            <person name="Koo B.-S."/>
            <person name="Lee G.-B."/>
            <person name="Kim H."/>
            <person name="Park H.-S."/>
            <person name="Yoon K.-O."/>
            <person name="Kim J.-H."/>
            <person name="Jung C.-H."/>
            <person name="Koh N.-H."/>
            <person name="Seo J.-S."/>
            <person name="Go S.-J."/>
        </authorList>
    </citation>
    <scope>NUCLEOTIDE SEQUENCE [LARGE SCALE GENOMIC DNA]</scope>
    <source>
        <strain>KACC10331 / KXO85</strain>
    </source>
</reference>
<gene>
    <name type="ordered locus">XOO0876</name>
</gene>
<dbReference type="EC" id="3.6.1.-" evidence="1"/>
<dbReference type="EMBL" id="AE013598">
    <property type="protein sequence ID" value="AAW74130.1"/>
    <property type="molecule type" value="Genomic_DNA"/>
</dbReference>
<dbReference type="SMR" id="Q5H4J1"/>
<dbReference type="STRING" id="291331.XOO0876"/>
<dbReference type="KEGG" id="xoo:XOO0876"/>
<dbReference type="HOGENOM" id="CLU_040416_1_0_6"/>
<dbReference type="Proteomes" id="UP000006735">
    <property type="component" value="Chromosome"/>
</dbReference>
<dbReference type="GO" id="GO:0005737">
    <property type="term" value="C:cytoplasm"/>
    <property type="evidence" value="ECO:0007669"/>
    <property type="project" value="UniProtKB-SubCell"/>
</dbReference>
<dbReference type="GO" id="GO:0047429">
    <property type="term" value="F:nucleoside triphosphate diphosphatase activity"/>
    <property type="evidence" value="ECO:0007669"/>
    <property type="project" value="InterPro"/>
</dbReference>
<dbReference type="GO" id="GO:0009117">
    <property type="term" value="P:nucleotide metabolic process"/>
    <property type="evidence" value="ECO:0007669"/>
    <property type="project" value="UniProtKB-KW"/>
</dbReference>
<dbReference type="CDD" id="cd00555">
    <property type="entry name" value="Maf"/>
    <property type="match status" value="1"/>
</dbReference>
<dbReference type="FunFam" id="3.90.950.10:FF:000005">
    <property type="entry name" value="7-methyl-GTP pyrophosphatase"/>
    <property type="match status" value="1"/>
</dbReference>
<dbReference type="Gene3D" id="3.90.950.10">
    <property type="match status" value="1"/>
</dbReference>
<dbReference type="HAMAP" id="MF_00528">
    <property type="entry name" value="Maf"/>
    <property type="match status" value="1"/>
</dbReference>
<dbReference type="InterPro" id="IPR029001">
    <property type="entry name" value="ITPase-like_fam"/>
</dbReference>
<dbReference type="InterPro" id="IPR003697">
    <property type="entry name" value="Maf-like"/>
</dbReference>
<dbReference type="NCBIfam" id="TIGR00172">
    <property type="entry name" value="maf"/>
    <property type="match status" value="1"/>
</dbReference>
<dbReference type="PANTHER" id="PTHR43213:SF10">
    <property type="entry name" value="7-METHYL-GTP PYROPHOSPHATASE"/>
    <property type="match status" value="1"/>
</dbReference>
<dbReference type="PANTHER" id="PTHR43213">
    <property type="entry name" value="BIFUNCTIONAL DTTP/UTP PYROPHOSPHATASE/METHYLTRANSFERASE PROTEIN-RELATED"/>
    <property type="match status" value="1"/>
</dbReference>
<dbReference type="Pfam" id="PF02545">
    <property type="entry name" value="Maf"/>
    <property type="match status" value="1"/>
</dbReference>
<dbReference type="PIRSF" id="PIRSF006305">
    <property type="entry name" value="Maf"/>
    <property type="match status" value="1"/>
</dbReference>
<dbReference type="SUPFAM" id="SSF52972">
    <property type="entry name" value="ITPase-like"/>
    <property type="match status" value="1"/>
</dbReference>
<protein>
    <recommendedName>
        <fullName evidence="1">7-methyl-GTP pyrophosphatase</fullName>
        <shortName evidence="1">m(7)GTP pyrophosphatase</shortName>
        <ecNumber evidence="1">3.6.1.-</ecNumber>
    </recommendedName>
</protein>
<comment type="function">
    <text evidence="1">Nucleoside triphosphate pyrophosphatase that hydrolyzes 7-methyl-GTP (m(7)GTP). May have a dual role in cell division arrest and in preventing the incorporation of modified nucleotides into cellular nucleic acids.</text>
</comment>
<comment type="catalytic activity">
    <reaction evidence="1">
        <text>N(7)-methyl-GTP + H2O = N(7)-methyl-GMP + diphosphate + H(+)</text>
        <dbReference type="Rhea" id="RHEA:58744"/>
        <dbReference type="ChEBI" id="CHEBI:15377"/>
        <dbReference type="ChEBI" id="CHEBI:15378"/>
        <dbReference type="ChEBI" id="CHEBI:33019"/>
        <dbReference type="ChEBI" id="CHEBI:58285"/>
        <dbReference type="ChEBI" id="CHEBI:87133"/>
    </reaction>
</comment>
<comment type="cofactor">
    <cofactor evidence="1">
        <name>a divalent metal cation</name>
        <dbReference type="ChEBI" id="CHEBI:60240"/>
    </cofactor>
</comment>
<comment type="subcellular location">
    <subcellularLocation>
        <location evidence="1">Cytoplasm</location>
    </subcellularLocation>
</comment>
<comment type="similarity">
    <text evidence="1">Belongs to the Maf family. YceF subfamily.</text>
</comment>
<sequence length="191" mass="20417">MMPRLILASTSAYRRQLLSRLQLEFDTGRPEVDEQPQSGEAPSALASRLAAEKAAAVAVRLPGAWVIGSDQVADLDGQALGKPGTRAQAQAQLTAMSGRTVRFHTAVSLIGPERELHALDLTEVQLRALTPAEIERYLDAEPALDCAGSFKCEGLGISLFDAIRSQDPTALVGLPLIALARLLREAGFHLP</sequence>
<name>NTPPB_XANOR</name>
<evidence type="ECO:0000255" key="1">
    <source>
        <dbReference type="HAMAP-Rule" id="MF_00528"/>
    </source>
</evidence>
<feature type="chain" id="PRO_0000267468" description="7-methyl-GTP pyrophosphatase">
    <location>
        <begin position="1"/>
        <end position="191"/>
    </location>
</feature>
<feature type="active site" description="Proton acceptor" evidence="1">
    <location>
        <position position="70"/>
    </location>
</feature>
<feature type="site" description="Important for substrate specificity" evidence="1">
    <location>
        <position position="13"/>
    </location>
</feature>
<feature type="site" description="Important for substrate specificity" evidence="1">
    <location>
        <position position="71"/>
    </location>
</feature>
<feature type="site" description="Important for substrate specificity" evidence="1">
    <location>
        <position position="153"/>
    </location>
</feature>